<dbReference type="EC" id="2.4.2.9" evidence="1"/>
<dbReference type="EMBL" id="BX571856">
    <property type="protein sequence ID" value="CAG41181.1"/>
    <property type="molecule type" value="Genomic_DNA"/>
</dbReference>
<dbReference type="RefSeq" id="WP_000048712.1">
    <property type="nucleotide sequence ID" value="NC_002952.2"/>
</dbReference>
<dbReference type="SMR" id="Q6GEW3"/>
<dbReference type="KEGG" id="sar:SAR2200"/>
<dbReference type="HOGENOM" id="CLU_067096_2_2_9"/>
<dbReference type="UniPathway" id="UPA00574">
    <property type="reaction ID" value="UER00636"/>
</dbReference>
<dbReference type="Proteomes" id="UP000000596">
    <property type="component" value="Chromosome"/>
</dbReference>
<dbReference type="GO" id="GO:0005525">
    <property type="term" value="F:GTP binding"/>
    <property type="evidence" value="ECO:0007669"/>
    <property type="project" value="UniProtKB-KW"/>
</dbReference>
<dbReference type="GO" id="GO:0000287">
    <property type="term" value="F:magnesium ion binding"/>
    <property type="evidence" value="ECO:0007669"/>
    <property type="project" value="UniProtKB-UniRule"/>
</dbReference>
<dbReference type="GO" id="GO:0004845">
    <property type="term" value="F:uracil phosphoribosyltransferase activity"/>
    <property type="evidence" value="ECO:0007669"/>
    <property type="project" value="UniProtKB-UniRule"/>
</dbReference>
<dbReference type="GO" id="GO:0044206">
    <property type="term" value="P:UMP salvage"/>
    <property type="evidence" value="ECO:0007669"/>
    <property type="project" value="UniProtKB-UniRule"/>
</dbReference>
<dbReference type="GO" id="GO:0006223">
    <property type="term" value="P:uracil salvage"/>
    <property type="evidence" value="ECO:0007669"/>
    <property type="project" value="InterPro"/>
</dbReference>
<dbReference type="CDD" id="cd06223">
    <property type="entry name" value="PRTases_typeI"/>
    <property type="match status" value="1"/>
</dbReference>
<dbReference type="FunFam" id="3.40.50.2020:FF:000003">
    <property type="entry name" value="Uracil phosphoribosyltransferase"/>
    <property type="match status" value="1"/>
</dbReference>
<dbReference type="Gene3D" id="3.40.50.2020">
    <property type="match status" value="1"/>
</dbReference>
<dbReference type="HAMAP" id="MF_01218_B">
    <property type="entry name" value="Upp_B"/>
    <property type="match status" value="1"/>
</dbReference>
<dbReference type="InterPro" id="IPR000836">
    <property type="entry name" value="PRibTrfase_dom"/>
</dbReference>
<dbReference type="InterPro" id="IPR029057">
    <property type="entry name" value="PRTase-like"/>
</dbReference>
<dbReference type="InterPro" id="IPR034332">
    <property type="entry name" value="Upp_B"/>
</dbReference>
<dbReference type="InterPro" id="IPR050054">
    <property type="entry name" value="UPRTase/APRTase"/>
</dbReference>
<dbReference type="InterPro" id="IPR005765">
    <property type="entry name" value="Ura_phspho_trans"/>
</dbReference>
<dbReference type="NCBIfam" id="NF001097">
    <property type="entry name" value="PRK00129.1"/>
    <property type="match status" value="1"/>
</dbReference>
<dbReference type="NCBIfam" id="TIGR01091">
    <property type="entry name" value="upp"/>
    <property type="match status" value="1"/>
</dbReference>
<dbReference type="PANTHER" id="PTHR32315">
    <property type="entry name" value="ADENINE PHOSPHORIBOSYLTRANSFERASE"/>
    <property type="match status" value="1"/>
</dbReference>
<dbReference type="PANTHER" id="PTHR32315:SF4">
    <property type="entry name" value="URACIL PHOSPHORIBOSYLTRANSFERASE, CHLOROPLASTIC"/>
    <property type="match status" value="1"/>
</dbReference>
<dbReference type="Pfam" id="PF14681">
    <property type="entry name" value="UPRTase"/>
    <property type="match status" value="1"/>
</dbReference>
<dbReference type="SUPFAM" id="SSF53271">
    <property type="entry name" value="PRTase-like"/>
    <property type="match status" value="1"/>
</dbReference>
<accession>Q6GEW3</accession>
<gene>
    <name evidence="1" type="primary">upp</name>
    <name type="ordered locus">SAR2200</name>
</gene>
<evidence type="ECO:0000255" key="1">
    <source>
        <dbReference type="HAMAP-Rule" id="MF_01218"/>
    </source>
</evidence>
<organism>
    <name type="scientific">Staphylococcus aureus (strain MRSA252)</name>
    <dbReference type="NCBI Taxonomy" id="282458"/>
    <lineage>
        <taxon>Bacteria</taxon>
        <taxon>Bacillati</taxon>
        <taxon>Bacillota</taxon>
        <taxon>Bacilli</taxon>
        <taxon>Bacillales</taxon>
        <taxon>Staphylococcaceae</taxon>
        <taxon>Staphylococcus</taxon>
    </lineage>
</organism>
<comment type="function">
    <text evidence="1">Catalyzes the conversion of uracil and 5-phospho-alpha-D-ribose 1-diphosphate (PRPP) to UMP and diphosphate.</text>
</comment>
<comment type="catalytic activity">
    <reaction evidence="1">
        <text>UMP + diphosphate = 5-phospho-alpha-D-ribose 1-diphosphate + uracil</text>
        <dbReference type="Rhea" id="RHEA:13017"/>
        <dbReference type="ChEBI" id="CHEBI:17568"/>
        <dbReference type="ChEBI" id="CHEBI:33019"/>
        <dbReference type="ChEBI" id="CHEBI:57865"/>
        <dbReference type="ChEBI" id="CHEBI:58017"/>
        <dbReference type="EC" id="2.4.2.9"/>
    </reaction>
</comment>
<comment type="cofactor">
    <cofactor evidence="1">
        <name>Mg(2+)</name>
        <dbReference type="ChEBI" id="CHEBI:18420"/>
    </cofactor>
    <text evidence="1">Binds 1 Mg(2+) ion per subunit. The magnesium is bound as Mg-PRPP.</text>
</comment>
<comment type="activity regulation">
    <text evidence="1">Allosterically activated by GTP.</text>
</comment>
<comment type="pathway">
    <text evidence="1">Pyrimidine metabolism; UMP biosynthesis via salvage pathway; UMP from uracil: step 1/1.</text>
</comment>
<comment type="similarity">
    <text evidence="1">Belongs to the UPRTase family.</text>
</comment>
<name>UPP_STAAR</name>
<keyword id="KW-0021">Allosteric enzyme</keyword>
<keyword id="KW-0328">Glycosyltransferase</keyword>
<keyword id="KW-0342">GTP-binding</keyword>
<keyword id="KW-0460">Magnesium</keyword>
<keyword id="KW-0547">Nucleotide-binding</keyword>
<keyword id="KW-0808">Transferase</keyword>
<sequence length="209" mass="23050">MSKVHVFDHPLIQHKLSYIRDVNTGTKEFRELVDEVGMLMAYEVTRDLELQDVDIETPVTKMTAKRLAGKKLAIVPILRAGLGMTDGILSLVPAARVGHIGLYRDPETLKAVEYFAKLPQDITERQIIVVDPMLATGASAIEAITSLKKRGAKNIRFMCLIAAPEGVEKMHEAHPDVDIYIAALDEKLNDKAYITPGLGDAGDRLFGTK</sequence>
<protein>
    <recommendedName>
        <fullName evidence="1">Uracil phosphoribosyltransferase</fullName>
        <ecNumber evidence="1">2.4.2.9</ecNumber>
    </recommendedName>
    <alternativeName>
        <fullName evidence="1">UMP pyrophosphorylase</fullName>
    </alternativeName>
    <alternativeName>
        <fullName evidence="1">UPRTase</fullName>
    </alternativeName>
</protein>
<proteinExistence type="inferred from homology"/>
<feature type="chain" id="PRO_0000120882" description="Uracil phosphoribosyltransferase">
    <location>
        <begin position="1"/>
        <end position="209"/>
    </location>
</feature>
<feature type="binding site" evidence="1">
    <location>
        <position position="79"/>
    </location>
    <ligand>
        <name>5-phospho-alpha-D-ribose 1-diphosphate</name>
        <dbReference type="ChEBI" id="CHEBI:58017"/>
    </ligand>
</feature>
<feature type="binding site" evidence="1">
    <location>
        <position position="104"/>
    </location>
    <ligand>
        <name>5-phospho-alpha-D-ribose 1-diphosphate</name>
        <dbReference type="ChEBI" id="CHEBI:58017"/>
    </ligand>
</feature>
<feature type="binding site" evidence="1">
    <location>
        <begin position="131"/>
        <end position="139"/>
    </location>
    <ligand>
        <name>5-phospho-alpha-D-ribose 1-diphosphate</name>
        <dbReference type="ChEBI" id="CHEBI:58017"/>
    </ligand>
</feature>
<feature type="binding site" evidence="1">
    <location>
        <position position="194"/>
    </location>
    <ligand>
        <name>uracil</name>
        <dbReference type="ChEBI" id="CHEBI:17568"/>
    </ligand>
</feature>
<feature type="binding site" evidence="1">
    <location>
        <begin position="199"/>
        <end position="201"/>
    </location>
    <ligand>
        <name>uracil</name>
        <dbReference type="ChEBI" id="CHEBI:17568"/>
    </ligand>
</feature>
<feature type="binding site" evidence="1">
    <location>
        <position position="200"/>
    </location>
    <ligand>
        <name>5-phospho-alpha-D-ribose 1-diphosphate</name>
        <dbReference type="ChEBI" id="CHEBI:58017"/>
    </ligand>
</feature>
<reference key="1">
    <citation type="journal article" date="2004" name="Proc. Natl. Acad. Sci. U.S.A.">
        <title>Complete genomes of two clinical Staphylococcus aureus strains: evidence for the rapid evolution of virulence and drug resistance.</title>
        <authorList>
            <person name="Holden M.T.G."/>
            <person name="Feil E.J."/>
            <person name="Lindsay J.A."/>
            <person name="Peacock S.J."/>
            <person name="Day N.P.J."/>
            <person name="Enright M.C."/>
            <person name="Foster T.J."/>
            <person name="Moore C.E."/>
            <person name="Hurst L."/>
            <person name="Atkin R."/>
            <person name="Barron A."/>
            <person name="Bason N."/>
            <person name="Bentley S.D."/>
            <person name="Chillingworth C."/>
            <person name="Chillingworth T."/>
            <person name="Churcher C."/>
            <person name="Clark L."/>
            <person name="Corton C."/>
            <person name="Cronin A."/>
            <person name="Doggett J."/>
            <person name="Dowd L."/>
            <person name="Feltwell T."/>
            <person name="Hance Z."/>
            <person name="Harris B."/>
            <person name="Hauser H."/>
            <person name="Holroyd S."/>
            <person name="Jagels K."/>
            <person name="James K.D."/>
            <person name="Lennard N."/>
            <person name="Line A."/>
            <person name="Mayes R."/>
            <person name="Moule S."/>
            <person name="Mungall K."/>
            <person name="Ormond D."/>
            <person name="Quail M.A."/>
            <person name="Rabbinowitsch E."/>
            <person name="Rutherford K.M."/>
            <person name="Sanders M."/>
            <person name="Sharp S."/>
            <person name="Simmonds M."/>
            <person name="Stevens K."/>
            <person name="Whitehead S."/>
            <person name="Barrell B.G."/>
            <person name="Spratt B.G."/>
            <person name="Parkhill J."/>
        </authorList>
    </citation>
    <scope>NUCLEOTIDE SEQUENCE [LARGE SCALE GENOMIC DNA]</scope>
    <source>
        <strain>MRSA252</strain>
    </source>
</reference>